<sequence length="91" mass="10582">MTKELCMRCYISGRVQGVWFRASAKKLAEQLMISGWARNLADGRVEVFACGKEDKLEEFYTWLQKGPLNARVDVCTRENLPWEDYISFDVL</sequence>
<comment type="catalytic activity">
    <reaction>
        <text>an acyl phosphate + H2O = a carboxylate + phosphate + H(+)</text>
        <dbReference type="Rhea" id="RHEA:14965"/>
        <dbReference type="ChEBI" id="CHEBI:15377"/>
        <dbReference type="ChEBI" id="CHEBI:15378"/>
        <dbReference type="ChEBI" id="CHEBI:29067"/>
        <dbReference type="ChEBI" id="CHEBI:43474"/>
        <dbReference type="ChEBI" id="CHEBI:59918"/>
        <dbReference type="EC" id="3.6.1.7"/>
    </reaction>
</comment>
<comment type="similarity">
    <text evidence="2">Belongs to the acylphosphatase family.</text>
</comment>
<comment type="sequence caution" evidence="2">
    <conflict type="erroneous initiation">
        <sequence resource="EMBL-CDS" id="ABQ55288"/>
    </conflict>
</comment>
<gene>
    <name type="primary">acyP</name>
    <name type="ordered locus">LPC_1334</name>
</gene>
<organism>
    <name type="scientific">Legionella pneumophila (strain Corby)</name>
    <dbReference type="NCBI Taxonomy" id="400673"/>
    <lineage>
        <taxon>Bacteria</taxon>
        <taxon>Pseudomonadati</taxon>
        <taxon>Pseudomonadota</taxon>
        <taxon>Gammaproteobacteria</taxon>
        <taxon>Legionellales</taxon>
        <taxon>Legionellaceae</taxon>
        <taxon>Legionella</taxon>
    </lineage>
</organism>
<reference key="1">
    <citation type="submission" date="2006-11" db="EMBL/GenBank/DDBJ databases">
        <title>Identification and characterization of a new conjugation/ type IVA secretion system (trb/tra) of L. pneumophila Corby localized on a mobile genomic island.</title>
        <authorList>
            <person name="Gloeckner G."/>
            <person name="Albert-Weissenberger C."/>
            <person name="Weinmann E."/>
            <person name="Jacobi S."/>
            <person name="Schunder E."/>
            <person name="Steinert M."/>
            <person name="Buchrieser C."/>
            <person name="Hacker J."/>
            <person name="Heuner K."/>
        </authorList>
    </citation>
    <scope>NUCLEOTIDE SEQUENCE [LARGE SCALE GENOMIC DNA]</scope>
    <source>
        <strain>Corby</strain>
    </source>
</reference>
<dbReference type="EC" id="3.6.1.7"/>
<dbReference type="EMBL" id="CP000675">
    <property type="protein sequence ID" value="ABQ55288.1"/>
    <property type="status" value="ALT_INIT"/>
    <property type="molecule type" value="Genomic_DNA"/>
</dbReference>
<dbReference type="RefSeq" id="WP_027219780.1">
    <property type="nucleotide sequence ID" value="NZ_JAPMSS010000005.1"/>
</dbReference>
<dbReference type="SMR" id="A5ID38"/>
<dbReference type="KEGG" id="lpc:LPC_1334"/>
<dbReference type="HOGENOM" id="CLU_141932_1_0_6"/>
<dbReference type="GO" id="GO:0003998">
    <property type="term" value="F:acylphosphatase activity"/>
    <property type="evidence" value="ECO:0007669"/>
    <property type="project" value="UniProtKB-EC"/>
</dbReference>
<dbReference type="Gene3D" id="3.30.70.100">
    <property type="match status" value="1"/>
</dbReference>
<dbReference type="InterPro" id="IPR020456">
    <property type="entry name" value="Acylphosphatase"/>
</dbReference>
<dbReference type="InterPro" id="IPR001792">
    <property type="entry name" value="Acylphosphatase-like_dom"/>
</dbReference>
<dbReference type="InterPro" id="IPR036046">
    <property type="entry name" value="Acylphosphatase-like_dom_sf"/>
</dbReference>
<dbReference type="InterPro" id="IPR017968">
    <property type="entry name" value="Acylphosphatase_CS"/>
</dbReference>
<dbReference type="NCBIfam" id="NF011022">
    <property type="entry name" value="PRK14451.1"/>
    <property type="match status" value="1"/>
</dbReference>
<dbReference type="PANTHER" id="PTHR47268">
    <property type="entry name" value="ACYLPHOSPHATASE"/>
    <property type="match status" value="1"/>
</dbReference>
<dbReference type="PANTHER" id="PTHR47268:SF4">
    <property type="entry name" value="ACYLPHOSPHATASE"/>
    <property type="match status" value="1"/>
</dbReference>
<dbReference type="Pfam" id="PF00708">
    <property type="entry name" value="Acylphosphatase"/>
    <property type="match status" value="1"/>
</dbReference>
<dbReference type="SUPFAM" id="SSF54975">
    <property type="entry name" value="Acylphosphatase/BLUF domain-like"/>
    <property type="match status" value="1"/>
</dbReference>
<dbReference type="PROSITE" id="PS00150">
    <property type="entry name" value="ACYLPHOSPHATASE_1"/>
    <property type="match status" value="1"/>
</dbReference>
<dbReference type="PROSITE" id="PS00151">
    <property type="entry name" value="ACYLPHOSPHATASE_2"/>
    <property type="match status" value="1"/>
</dbReference>
<dbReference type="PROSITE" id="PS51160">
    <property type="entry name" value="ACYLPHOSPHATASE_3"/>
    <property type="match status" value="1"/>
</dbReference>
<proteinExistence type="inferred from homology"/>
<keyword id="KW-0378">Hydrolase</keyword>
<feature type="chain" id="PRO_0000326732" description="Acylphosphatase">
    <location>
        <begin position="1"/>
        <end position="91"/>
    </location>
</feature>
<feature type="domain" description="Acylphosphatase-like" evidence="1">
    <location>
        <begin position="6"/>
        <end position="91"/>
    </location>
</feature>
<feature type="active site" evidence="1">
    <location>
        <position position="21"/>
    </location>
</feature>
<feature type="active site" evidence="1">
    <location>
        <position position="39"/>
    </location>
</feature>
<evidence type="ECO:0000255" key="1">
    <source>
        <dbReference type="PROSITE-ProRule" id="PRU00520"/>
    </source>
</evidence>
<evidence type="ECO:0000305" key="2"/>
<name>ACYP_LEGPC</name>
<accession>A5ID38</accession>
<protein>
    <recommendedName>
        <fullName>Acylphosphatase</fullName>
        <ecNumber>3.6.1.7</ecNumber>
    </recommendedName>
    <alternativeName>
        <fullName>Acylphosphate phosphohydrolase</fullName>
    </alternativeName>
</protein>